<feature type="chain" id="PRO_1000046423" description="Phosphoribosylformylglycinamidine cyclo-ligase">
    <location>
        <begin position="1"/>
        <end position="359"/>
    </location>
</feature>
<comment type="catalytic activity">
    <reaction evidence="1">
        <text>2-formamido-N(1)-(5-O-phospho-beta-D-ribosyl)acetamidine + ATP = 5-amino-1-(5-phospho-beta-D-ribosyl)imidazole + ADP + phosphate + H(+)</text>
        <dbReference type="Rhea" id="RHEA:23032"/>
        <dbReference type="ChEBI" id="CHEBI:15378"/>
        <dbReference type="ChEBI" id="CHEBI:30616"/>
        <dbReference type="ChEBI" id="CHEBI:43474"/>
        <dbReference type="ChEBI" id="CHEBI:137981"/>
        <dbReference type="ChEBI" id="CHEBI:147287"/>
        <dbReference type="ChEBI" id="CHEBI:456216"/>
        <dbReference type="EC" id="6.3.3.1"/>
    </reaction>
</comment>
<comment type="pathway">
    <text evidence="1">Purine metabolism; IMP biosynthesis via de novo pathway; 5-amino-1-(5-phospho-D-ribosyl)imidazole from N(2)-formyl-N(1)-(5-phospho-D-ribosyl)glycinamide: step 2/2.</text>
</comment>
<comment type="subcellular location">
    <subcellularLocation>
        <location evidence="1">Cytoplasm</location>
    </subcellularLocation>
</comment>
<comment type="similarity">
    <text evidence="1">Belongs to the AIR synthase family.</text>
</comment>
<keyword id="KW-0067">ATP-binding</keyword>
<keyword id="KW-0963">Cytoplasm</keyword>
<keyword id="KW-0436">Ligase</keyword>
<keyword id="KW-0547">Nucleotide-binding</keyword>
<keyword id="KW-0658">Purine biosynthesis</keyword>
<sequence length="359" mass="37447">MTMENKPAGQNGLTYAQAGVDIDAGNLMVEKIKPLVRSTRRPGADGEIGGFGGLFDLKAAGFKDPVLVAANDGVGTKLKIAIDADIHDTVGIDLVAMCVNDLVVQGAEPLFFLDYYATGKLSPDQGVAIVSGIAEGCRQAGCALIGGETAEMPGMYRDGDYDLAGFAVGAAERDRLLPRGDIAEGDIILGLASSGVHSNGFSLVRRIVELSGLGWKSQAPFQPGATLGEALLTPTRIYVKPLLAAIRACDGIKALAHITGGGFPDNIPRVLPKGLAAEIDLPAIAVPPVFSWLAKTGNVEPNEMLRTFNCGIGMIAVVNPAKVDEVIAALAAEGEKVVTLGRMTRREKDGVIYKGQLAL</sequence>
<organism>
    <name type="scientific">Brucella ovis (strain ATCC 25840 / 63/290 / NCTC 10512)</name>
    <dbReference type="NCBI Taxonomy" id="444178"/>
    <lineage>
        <taxon>Bacteria</taxon>
        <taxon>Pseudomonadati</taxon>
        <taxon>Pseudomonadota</taxon>
        <taxon>Alphaproteobacteria</taxon>
        <taxon>Hyphomicrobiales</taxon>
        <taxon>Brucellaceae</taxon>
        <taxon>Brucella/Ochrobactrum group</taxon>
        <taxon>Brucella</taxon>
    </lineage>
</organism>
<proteinExistence type="inferred from homology"/>
<gene>
    <name evidence="1" type="primary">purM</name>
    <name type="ordered locus">BOV_0701</name>
</gene>
<dbReference type="EC" id="6.3.3.1" evidence="1"/>
<dbReference type="EMBL" id="CP000708">
    <property type="protein sequence ID" value="ABQ61504.1"/>
    <property type="molecule type" value="Genomic_DNA"/>
</dbReference>
<dbReference type="RefSeq" id="WP_002963853.1">
    <property type="nucleotide sequence ID" value="NC_009505.1"/>
</dbReference>
<dbReference type="SMR" id="A5VPP4"/>
<dbReference type="GeneID" id="93016888"/>
<dbReference type="KEGG" id="bov:BOV_0701"/>
<dbReference type="HOGENOM" id="CLU_047116_0_0_5"/>
<dbReference type="PhylomeDB" id="A5VPP4"/>
<dbReference type="UniPathway" id="UPA00074">
    <property type="reaction ID" value="UER00129"/>
</dbReference>
<dbReference type="PRO" id="PR:A5VPP4"/>
<dbReference type="Proteomes" id="UP000006383">
    <property type="component" value="Chromosome I"/>
</dbReference>
<dbReference type="GO" id="GO:0005829">
    <property type="term" value="C:cytosol"/>
    <property type="evidence" value="ECO:0007669"/>
    <property type="project" value="TreeGrafter"/>
</dbReference>
<dbReference type="GO" id="GO:0005524">
    <property type="term" value="F:ATP binding"/>
    <property type="evidence" value="ECO:0007669"/>
    <property type="project" value="UniProtKB-KW"/>
</dbReference>
<dbReference type="GO" id="GO:0004637">
    <property type="term" value="F:phosphoribosylamine-glycine ligase activity"/>
    <property type="evidence" value="ECO:0007669"/>
    <property type="project" value="TreeGrafter"/>
</dbReference>
<dbReference type="GO" id="GO:0004641">
    <property type="term" value="F:phosphoribosylformylglycinamidine cyclo-ligase activity"/>
    <property type="evidence" value="ECO:0007669"/>
    <property type="project" value="UniProtKB-UniRule"/>
</dbReference>
<dbReference type="GO" id="GO:0006189">
    <property type="term" value="P:'de novo' IMP biosynthetic process"/>
    <property type="evidence" value="ECO:0007669"/>
    <property type="project" value="UniProtKB-UniRule"/>
</dbReference>
<dbReference type="GO" id="GO:0046084">
    <property type="term" value="P:adenine biosynthetic process"/>
    <property type="evidence" value="ECO:0007669"/>
    <property type="project" value="TreeGrafter"/>
</dbReference>
<dbReference type="CDD" id="cd02196">
    <property type="entry name" value="PurM"/>
    <property type="match status" value="1"/>
</dbReference>
<dbReference type="FunFam" id="3.30.1330.10:FF:000001">
    <property type="entry name" value="Phosphoribosylformylglycinamidine cyclo-ligase"/>
    <property type="match status" value="1"/>
</dbReference>
<dbReference type="FunFam" id="3.90.650.10:FF:000019">
    <property type="entry name" value="Trifunctional purine biosynthetic protein adenosine-3"/>
    <property type="match status" value="1"/>
</dbReference>
<dbReference type="Gene3D" id="3.90.650.10">
    <property type="entry name" value="PurM-like C-terminal domain"/>
    <property type="match status" value="1"/>
</dbReference>
<dbReference type="Gene3D" id="3.30.1330.10">
    <property type="entry name" value="PurM-like, N-terminal domain"/>
    <property type="match status" value="1"/>
</dbReference>
<dbReference type="HAMAP" id="MF_00741">
    <property type="entry name" value="AIRS"/>
    <property type="match status" value="1"/>
</dbReference>
<dbReference type="InterPro" id="IPR010918">
    <property type="entry name" value="PurM-like_C_dom"/>
</dbReference>
<dbReference type="InterPro" id="IPR036676">
    <property type="entry name" value="PurM-like_C_sf"/>
</dbReference>
<dbReference type="InterPro" id="IPR016188">
    <property type="entry name" value="PurM-like_N"/>
</dbReference>
<dbReference type="InterPro" id="IPR036921">
    <property type="entry name" value="PurM-like_N_sf"/>
</dbReference>
<dbReference type="InterPro" id="IPR004733">
    <property type="entry name" value="PurM_cligase"/>
</dbReference>
<dbReference type="NCBIfam" id="TIGR00878">
    <property type="entry name" value="purM"/>
    <property type="match status" value="1"/>
</dbReference>
<dbReference type="PANTHER" id="PTHR10520:SF12">
    <property type="entry name" value="TRIFUNCTIONAL PURINE BIOSYNTHETIC PROTEIN ADENOSINE-3"/>
    <property type="match status" value="1"/>
</dbReference>
<dbReference type="PANTHER" id="PTHR10520">
    <property type="entry name" value="TRIFUNCTIONAL PURINE BIOSYNTHETIC PROTEIN ADENOSINE-3-RELATED"/>
    <property type="match status" value="1"/>
</dbReference>
<dbReference type="Pfam" id="PF00586">
    <property type="entry name" value="AIRS"/>
    <property type="match status" value="1"/>
</dbReference>
<dbReference type="Pfam" id="PF02769">
    <property type="entry name" value="AIRS_C"/>
    <property type="match status" value="1"/>
</dbReference>
<dbReference type="SUPFAM" id="SSF56042">
    <property type="entry name" value="PurM C-terminal domain-like"/>
    <property type="match status" value="1"/>
</dbReference>
<dbReference type="SUPFAM" id="SSF55326">
    <property type="entry name" value="PurM N-terminal domain-like"/>
    <property type="match status" value="1"/>
</dbReference>
<name>PUR5_BRUO2</name>
<accession>A5VPP4</accession>
<evidence type="ECO:0000255" key="1">
    <source>
        <dbReference type="HAMAP-Rule" id="MF_00741"/>
    </source>
</evidence>
<protein>
    <recommendedName>
        <fullName evidence="1">Phosphoribosylformylglycinamidine cyclo-ligase</fullName>
        <ecNumber evidence="1">6.3.3.1</ecNumber>
    </recommendedName>
    <alternativeName>
        <fullName evidence="1">AIR synthase</fullName>
    </alternativeName>
    <alternativeName>
        <fullName evidence="1">AIRS</fullName>
    </alternativeName>
    <alternativeName>
        <fullName evidence="1">Phosphoribosyl-aminoimidazole synthetase</fullName>
    </alternativeName>
</protein>
<reference key="1">
    <citation type="journal article" date="2009" name="PLoS ONE">
        <title>Genome degradation in Brucella ovis corresponds with narrowing of its host range and tissue tropism.</title>
        <authorList>
            <person name="Tsolis R.M."/>
            <person name="Seshadri R."/>
            <person name="Santos R.L."/>
            <person name="Sangari F.J."/>
            <person name="Lobo J.M."/>
            <person name="de Jong M.F."/>
            <person name="Ren Q."/>
            <person name="Myers G."/>
            <person name="Brinkac L.M."/>
            <person name="Nelson W.C."/>
            <person name="Deboy R.T."/>
            <person name="Angiuoli S."/>
            <person name="Khouri H."/>
            <person name="Dimitrov G."/>
            <person name="Robinson J.R."/>
            <person name="Mulligan S."/>
            <person name="Walker R.L."/>
            <person name="Elzer P.E."/>
            <person name="Hassan K.A."/>
            <person name="Paulsen I.T."/>
        </authorList>
    </citation>
    <scope>NUCLEOTIDE SEQUENCE [LARGE SCALE GENOMIC DNA]</scope>
    <source>
        <strain>ATCC 25840 / 63/290 / NCTC 10512</strain>
    </source>
</reference>